<name>PLCH1_HUMAN</name>
<sequence>MADLEVYKNLSPEKVERCMSVMQSGTQMIKLKRGTKGLVRLFYLDEHRTRLRWRPSRKSEKAKILIDSIYKVTEGRQSEIFHRQAEGNFDPSCCFTIYHGNHMESLDLITSNPEEARTWITGLKYLMAGISDEDSLAKRQRTHDQWVKQTFEEADKNGDGLLNIEEIHQLMHKLNVNLPRRKVRQMFQEADTDENQGTLTFEEFCVFYKMMSLRRDLYLLLLSYSDKKDHLTVEELAQFLKVEQKMNNVTTDYCLDIIKKFEVSEENKVKNVLGIEGFTNFMRSPACDIFNPLHHEVYQDMDQPLCNYYIASSHNTYLTGDQLLSQSKVDMYARVLQEGCRCVEVDCWDGPDGEPVVHHGYTLTSKILFRDVVETINKHAFVKNEFPVILSIENHCSIQQQRKIAQYLKGIFGDKLDLSSVDTGECKQLPSPQSLKGKILVKGKKLPYHLGDDAEEGEVSDEDSADEIEDECKFKLHYSNGTTEHQVESFIRKKLESLLKESQIRDKEDPDSFTVRALLKATHEGLNAHLKQSPDVKESGKKSHGRSLMTNFGKHKKTTKSRSKSYSTDDEEDTQQSTGKEGGQLYRLGRRRKTMKLCRELSDLVVYTNSVAAQDIVDDGTTGNVLSFSETRAHQVVQQKSEQFMIYNQKQLTRIYPSAYRIDSSNFNPLPYWNAGCQLVALNYQSEGRMMQLNRAKFKANGNCGYVLKPQQMCKGTFNPFSGDPLPANPKKQLILKVISGQQLPKPPDSMFGDRGEIIDPFVEVEIIGLPVDCCKDQTRVVDDNGFNPVWEETLTFTVHMPEIALVRFLVWDHDPIGRDFVGQRTVTFSSLVPGYRHVYLEGLTEASIFVHITINEIYGKWSPLILNPSYTILHFLGATKNRQLQGLKGLFNKNPRHSSSENNSHYVRKRSIGDRILRRTASAPAKGRKKSKMGFQEMVEIKDSVSEATRDQDGVLRRTTRSLQARPVSMPVDRNLLGALSLPVSETAKDIEGKENSLAEDKDGRRKGKASIKDPHFLNFNKKLSSSSSALLHKDTSQGDTIVSTAHMSVTGEQLGMSSPRGGRTTSNATSNCQENPCPSKSLSPKQHLAPDPVVNPTQDLHGVKIKEKGNPEDFVEGKSILSGSVLSHSNLEIKNLEGNRGKGRAATSFSLSDVSMLCSDIPDLHSTAILQESVISHLIDNVTLTNENEPGSSISALIGQFDETNNQALTVVSHLHNTSVMSGHCPLPSLGLKMPIKHGFCKGKSKSSFLCSSPELIALSSSETTKHATNTVYETTCTPISKTKPDDDLSSKAKTAALESNLPGSPNTSRGWLPKSPTKGEDWETLKSCSPASSPDLTLEDVIADPTLCFNSGESSLVEIDGESENLSLTTCEYRREGTSQLASPLKLKYNQGVVEHFQRGLRNGYCKETLRPSVPEIFNNIQDVKTQSISYLAYQGAGFVHNHFSDSDAKMFQTCVPQQSSAQDMHVPVPKQLAHLPLPALKLPSPCKSKSLGDLTSEDIACNFESKYQCISKSFVTTGIRDKKGVTVKTKSLEPIDALTEQLRKLVSFDQEDNCQVLYSKQDANQLPRALVRKLSSRSQSRVRNIASRAKEKQEANKQKVPNPSNGAGVVLRNKPSAPTPAVNRHSTGSYIAGYLKNTKGGGLEGRGIPEGACTALHYGHVDQFCSDNSVLQTEPSSDDKPEIYFLLRL</sequence>
<accession>Q4KWH8</accession>
<accession>Q29RV9</accession>
<accession>Q4KWH9</accession>
<accession>Q68CN0</accession>
<accession>Q86XK4</accession>
<accession>Q9H9U2</accession>
<accession>Q9UPT3</accession>
<reference key="1">
    <citation type="journal article" date="2005" name="Biochem. J.">
        <title>Molecular cloning and characterization of a novel phospholipase C, PLC-eta.</title>
        <authorList>
            <person name="Hwang J.-I."/>
            <person name="Oh Y.-S."/>
            <person name="Shin K.-J."/>
            <person name="Kim H."/>
            <person name="Ryu S.H."/>
            <person name="Suh P.-G."/>
        </authorList>
    </citation>
    <scope>NUCLEOTIDE SEQUENCE [MRNA] (ISOFORMS 1 AND 3)</scope>
    <scope>FUNCTION</scope>
    <scope>TISSUE SPECIFICITY</scope>
    <scope>SUBCELLULAR LOCATION</scope>
    <scope>CATALYTIC ACTIVITY</scope>
</reference>
<reference key="2">
    <citation type="journal article" date="2004" name="Genome Res.">
        <title>The status, quality, and expansion of the NIH full-length cDNA project: the Mammalian Gene Collection (MGC).</title>
        <authorList>
            <consortium name="The MGC Project Team"/>
        </authorList>
    </citation>
    <scope>NUCLEOTIDE SEQUENCE [LARGE SCALE MRNA] (ISOFORM 2)</scope>
    <scope>NUCLEOTIDE SEQUENCE [LARGE SCALE MRNA] OF 926-1693 (ISOFORM 1)</scope>
    <source>
        <tissue>Eye</tissue>
        <tissue>Testis</tissue>
    </source>
</reference>
<reference key="3">
    <citation type="journal article" date="1999" name="DNA Res.">
        <title>Prediction of the coding sequences of unidentified human genes. XIV. The complete sequences of 100 new cDNA clones from brain which code for large proteins in vitro.</title>
        <authorList>
            <person name="Kikuno R."/>
            <person name="Nagase T."/>
            <person name="Ishikawa K."/>
            <person name="Hirosawa M."/>
            <person name="Miyajima N."/>
            <person name="Tanaka A."/>
            <person name="Kotani H."/>
            <person name="Nomura N."/>
            <person name="Ohara O."/>
        </authorList>
    </citation>
    <scope>NUCLEOTIDE SEQUENCE [LARGE SCALE MRNA] OF 216-1693 (ISOFORM 3)</scope>
    <source>
        <tissue>Brain</tissue>
    </source>
</reference>
<reference key="4">
    <citation type="journal article" date="2004" name="Nat. Genet.">
        <title>Complete sequencing and characterization of 21,243 full-length human cDNAs.</title>
        <authorList>
            <person name="Ota T."/>
            <person name="Suzuki Y."/>
            <person name="Nishikawa T."/>
            <person name="Otsuki T."/>
            <person name="Sugiyama T."/>
            <person name="Irie R."/>
            <person name="Wakamatsu A."/>
            <person name="Hayashi K."/>
            <person name="Sato H."/>
            <person name="Nagai K."/>
            <person name="Kimura K."/>
            <person name="Makita H."/>
            <person name="Sekine M."/>
            <person name="Obayashi M."/>
            <person name="Nishi T."/>
            <person name="Shibahara T."/>
            <person name="Tanaka T."/>
            <person name="Ishii S."/>
            <person name="Yamamoto J."/>
            <person name="Saito K."/>
            <person name="Kawai Y."/>
            <person name="Isono Y."/>
            <person name="Nakamura Y."/>
            <person name="Nagahari K."/>
            <person name="Murakami K."/>
            <person name="Yasuda T."/>
            <person name="Iwayanagi T."/>
            <person name="Wagatsuma M."/>
            <person name="Shiratori A."/>
            <person name="Sudo H."/>
            <person name="Hosoiri T."/>
            <person name="Kaku Y."/>
            <person name="Kodaira H."/>
            <person name="Kondo H."/>
            <person name="Sugawara M."/>
            <person name="Takahashi M."/>
            <person name="Kanda K."/>
            <person name="Yokoi T."/>
            <person name="Furuya T."/>
            <person name="Kikkawa E."/>
            <person name="Omura Y."/>
            <person name="Abe K."/>
            <person name="Kamihara K."/>
            <person name="Katsuta N."/>
            <person name="Sato K."/>
            <person name="Tanikawa M."/>
            <person name="Yamazaki M."/>
            <person name="Ninomiya K."/>
            <person name="Ishibashi T."/>
            <person name="Yamashita H."/>
            <person name="Murakawa K."/>
            <person name="Fujimori K."/>
            <person name="Tanai H."/>
            <person name="Kimata M."/>
            <person name="Watanabe M."/>
            <person name="Hiraoka S."/>
            <person name="Chiba Y."/>
            <person name="Ishida S."/>
            <person name="Ono Y."/>
            <person name="Takiguchi S."/>
            <person name="Watanabe S."/>
            <person name="Yosida M."/>
            <person name="Hotuta T."/>
            <person name="Kusano J."/>
            <person name="Kanehori K."/>
            <person name="Takahashi-Fujii A."/>
            <person name="Hara H."/>
            <person name="Tanase T.-O."/>
            <person name="Nomura Y."/>
            <person name="Togiya S."/>
            <person name="Komai F."/>
            <person name="Hara R."/>
            <person name="Takeuchi K."/>
            <person name="Arita M."/>
            <person name="Imose N."/>
            <person name="Musashino K."/>
            <person name="Yuuki H."/>
            <person name="Oshima A."/>
            <person name="Sasaki N."/>
            <person name="Aotsuka S."/>
            <person name="Yoshikawa Y."/>
            <person name="Matsunawa H."/>
            <person name="Ichihara T."/>
            <person name="Shiohata N."/>
            <person name="Sano S."/>
            <person name="Moriya S."/>
            <person name="Momiyama H."/>
            <person name="Satoh N."/>
            <person name="Takami S."/>
            <person name="Terashima Y."/>
            <person name="Suzuki O."/>
            <person name="Nakagawa S."/>
            <person name="Senoh A."/>
            <person name="Mizoguchi H."/>
            <person name="Goto Y."/>
            <person name="Shimizu F."/>
            <person name="Wakebe H."/>
            <person name="Hishigaki H."/>
            <person name="Watanabe T."/>
            <person name="Sugiyama A."/>
            <person name="Takemoto M."/>
            <person name="Kawakami B."/>
            <person name="Yamazaki M."/>
            <person name="Watanabe K."/>
            <person name="Kumagai A."/>
            <person name="Itakura S."/>
            <person name="Fukuzumi Y."/>
            <person name="Fujimori Y."/>
            <person name="Komiyama M."/>
            <person name="Tashiro H."/>
            <person name="Tanigami A."/>
            <person name="Fujiwara T."/>
            <person name="Ono T."/>
            <person name="Yamada K."/>
            <person name="Fujii Y."/>
            <person name="Ozaki K."/>
            <person name="Hirao M."/>
            <person name="Ohmori Y."/>
            <person name="Kawabata A."/>
            <person name="Hikiji T."/>
            <person name="Kobatake N."/>
            <person name="Inagaki H."/>
            <person name="Ikema Y."/>
            <person name="Okamoto S."/>
            <person name="Okitani R."/>
            <person name="Kawakami T."/>
            <person name="Noguchi S."/>
            <person name="Itoh T."/>
            <person name="Shigeta K."/>
            <person name="Senba T."/>
            <person name="Matsumura K."/>
            <person name="Nakajima Y."/>
            <person name="Mizuno T."/>
            <person name="Morinaga M."/>
            <person name="Sasaki M."/>
            <person name="Togashi T."/>
            <person name="Oyama M."/>
            <person name="Hata H."/>
            <person name="Watanabe M."/>
            <person name="Komatsu T."/>
            <person name="Mizushima-Sugano J."/>
            <person name="Satoh T."/>
            <person name="Shirai Y."/>
            <person name="Takahashi Y."/>
            <person name="Nakagawa K."/>
            <person name="Okumura K."/>
            <person name="Nagase T."/>
            <person name="Nomura N."/>
            <person name="Kikuchi H."/>
            <person name="Masuho Y."/>
            <person name="Yamashita R."/>
            <person name="Nakai K."/>
            <person name="Yada T."/>
            <person name="Nakamura Y."/>
            <person name="Ohara O."/>
            <person name="Isogai T."/>
            <person name="Sugano S."/>
        </authorList>
    </citation>
    <scope>NUCLEOTIDE SEQUENCE [LARGE SCALE MRNA] OF 392-1034 (ISOFORM 4)</scope>
</reference>
<reference key="5">
    <citation type="journal article" date="2007" name="BMC Genomics">
        <title>The full-ORF clone resource of the German cDNA consortium.</title>
        <authorList>
            <person name="Bechtel S."/>
            <person name="Rosenfelder H."/>
            <person name="Duda A."/>
            <person name="Schmidt C.P."/>
            <person name="Ernst U."/>
            <person name="Wellenreuther R."/>
            <person name="Mehrle A."/>
            <person name="Schuster C."/>
            <person name="Bahr A."/>
            <person name="Bloecker H."/>
            <person name="Heubner D."/>
            <person name="Hoerlein A."/>
            <person name="Michel G."/>
            <person name="Wedler H."/>
            <person name="Koehrer K."/>
            <person name="Ottenwaelder B."/>
            <person name="Poustka A."/>
            <person name="Wiemann S."/>
            <person name="Schupp I."/>
        </authorList>
    </citation>
    <scope>NUCLEOTIDE SEQUENCE [LARGE SCALE MRNA] OF 1470-1693 (ISOFORMS 1/2)</scope>
    <source>
        <tissue>Testis</tissue>
    </source>
</reference>
<reference key="6">
    <citation type="journal article" date="2009" name="Anal. Chem.">
        <title>Lys-N and trypsin cover complementary parts of the phosphoproteome in a refined SCX-based approach.</title>
        <authorList>
            <person name="Gauci S."/>
            <person name="Helbig A.O."/>
            <person name="Slijper M."/>
            <person name="Krijgsveld J."/>
            <person name="Heck A.J."/>
            <person name="Mohammed S."/>
        </authorList>
    </citation>
    <scope>IDENTIFICATION BY MASS SPECTROMETRY [LARGE SCALE ANALYSIS]</scope>
</reference>
<reference key="7">
    <citation type="journal article" date="2011" name="Sci. Signal.">
        <title>System-wide temporal characterization of the proteome and phosphoproteome of human embryonic stem cell differentiation.</title>
        <authorList>
            <person name="Rigbolt K.T."/>
            <person name="Prokhorova T.A."/>
            <person name="Akimov V."/>
            <person name="Henningsen J."/>
            <person name="Johansen P.T."/>
            <person name="Kratchmarova I."/>
            <person name="Kassem M."/>
            <person name="Mann M."/>
            <person name="Olsen J.V."/>
            <person name="Blagoev B."/>
        </authorList>
    </citation>
    <scope>IDENTIFICATION BY MASS SPECTROMETRY [LARGE SCALE ANALYSIS]</scope>
</reference>
<reference key="8">
    <citation type="journal article" date="2022" name="J. Med. Genet.">
        <title>Mutations in phospholipase C eta-1 (PLCH1) are associated with holoprosencephaly.</title>
        <authorList>
            <person name="Drissi I."/>
            <person name="Fletcher E."/>
            <person name="Shaheen R."/>
            <person name="Nahorski M."/>
            <person name="Alhashem A.M."/>
            <person name="Lisgo S."/>
            <person name="Fernandez-Jaen A."/>
            <person name="Schon K."/>
            <person name="Tlili-Graiess K."/>
            <person name="Smithson S.F."/>
            <person name="Lindsay S."/>
            <person name="Sharpe H.J."/>
            <person name="Alkuraya F.S."/>
            <person name="Woods G."/>
        </authorList>
    </citation>
    <scope>INVOLVEMENT IN HPE14</scope>
    <scope>VARIANT HPE14 689-ARG--LEU-1693 DEL</scope>
    <scope>SUBCELLULAR LOCATION</scope>
    <scope>TISSUE SPECIFICITY</scope>
</reference>
<gene>
    <name evidence="16" type="primary">PLCH1</name>
    <name type="synonym">KIAA1069</name>
    <name type="synonym">PLCL3</name>
</gene>
<feature type="chain" id="PRO_0000329007" description="1-phosphatidylinositol 4,5-bisphosphate phosphodiesterase eta-1">
    <location>
        <begin position="1"/>
        <end position="1693"/>
    </location>
</feature>
<feature type="domain" description="PH" evidence="3">
    <location>
        <begin position="20"/>
        <end position="128"/>
    </location>
</feature>
<feature type="domain" description="EF-hand 1" evidence="6">
    <location>
        <begin position="142"/>
        <end position="177"/>
    </location>
</feature>
<feature type="domain" description="EF-hand 2" evidence="6">
    <location>
        <begin position="178"/>
        <end position="214"/>
    </location>
</feature>
<feature type="domain" description="EF-hand 3" evidence="6">
    <location>
        <begin position="226"/>
        <end position="246"/>
    </location>
</feature>
<feature type="domain" description="PI-PLC X-box" evidence="4">
    <location>
        <begin position="299"/>
        <end position="444"/>
    </location>
</feature>
<feature type="domain" description="PI-PLC Y-box" evidence="5">
    <location>
        <begin position="601"/>
        <end position="714"/>
    </location>
</feature>
<feature type="domain" description="C2" evidence="2">
    <location>
        <begin position="715"/>
        <end position="843"/>
    </location>
</feature>
<feature type="region of interest" description="Disordered" evidence="7">
    <location>
        <begin position="526"/>
        <end position="585"/>
    </location>
</feature>
<feature type="region of interest" description="Disordered" evidence="7">
    <location>
        <begin position="992"/>
        <end position="1014"/>
    </location>
</feature>
<feature type="region of interest" description="Disordered" evidence="7">
    <location>
        <begin position="1052"/>
        <end position="1089"/>
    </location>
</feature>
<feature type="region of interest" description="Disordered" evidence="7">
    <location>
        <begin position="1300"/>
        <end position="1329"/>
    </location>
</feature>
<feature type="region of interest" description="Disordered" evidence="7">
    <location>
        <begin position="1578"/>
        <end position="1613"/>
    </location>
</feature>
<feature type="compositionally biased region" description="Basic and acidic residues" evidence="7">
    <location>
        <begin position="532"/>
        <end position="541"/>
    </location>
</feature>
<feature type="compositionally biased region" description="Basic residues" evidence="7">
    <location>
        <begin position="553"/>
        <end position="563"/>
    </location>
</feature>
<feature type="compositionally biased region" description="Basic and acidic residues" evidence="7">
    <location>
        <begin position="992"/>
        <end position="1005"/>
    </location>
</feature>
<feature type="compositionally biased region" description="Polar residues" evidence="7">
    <location>
        <begin position="1065"/>
        <end position="1086"/>
    </location>
</feature>
<feature type="compositionally biased region" description="Basic and acidic residues" evidence="7">
    <location>
        <begin position="1592"/>
        <end position="1601"/>
    </location>
</feature>
<feature type="active site" evidence="4">
    <location>
        <position position="314"/>
    </location>
</feature>
<feature type="active site" evidence="4">
    <location>
        <position position="358"/>
    </location>
</feature>
<feature type="binding site" evidence="6">
    <location>
        <position position="155"/>
    </location>
    <ligand>
        <name>Ca(2+)</name>
        <dbReference type="ChEBI" id="CHEBI:29108"/>
        <label>1</label>
    </ligand>
</feature>
<feature type="binding site" evidence="6">
    <location>
        <position position="157"/>
    </location>
    <ligand>
        <name>Ca(2+)</name>
        <dbReference type="ChEBI" id="CHEBI:29108"/>
        <label>1</label>
    </ligand>
</feature>
<feature type="binding site" evidence="6">
    <location>
        <position position="159"/>
    </location>
    <ligand>
        <name>Ca(2+)</name>
        <dbReference type="ChEBI" id="CHEBI:29108"/>
        <label>1</label>
    </ligand>
</feature>
<feature type="binding site" evidence="6">
    <location>
        <position position="166"/>
    </location>
    <ligand>
        <name>Ca(2+)</name>
        <dbReference type="ChEBI" id="CHEBI:29108"/>
        <label>1</label>
    </ligand>
</feature>
<feature type="binding site" evidence="1">
    <location>
        <position position="315"/>
    </location>
    <ligand>
        <name>Ca(2+)</name>
        <dbReference type="ChEBI" id="CHEBI:29108"/>
        <label>2</label>
        <note>catalytic</note>
    </ligand>
</feature>
<feature type="binding site" evidence="1">
    <location>
        <position position="344"/>
    </location>
    <ligand>
        <name>Ca(2+)</name>
        <dbReference type="ChEBI" id="CHEBI:29108"/>
        <label>2</label>
        <note>catalytic</note>
    </ligand>
</feature>
<feature type="binding site" evidence="1">
    <location>
        <position position="346"/>
    </location>
    <ligand>
        <name>Ca(2+)</name>
        <dbReference type="ChEBI" id="CHEBI:29108"/>
        <label>2</label>
        <note>catalytic</note>
    </ligand>
</feature>
<feature type="binding site" evidence="1">
    <location>
        <position position="393"/>
    </location>
    <ligand>
        <name>Ca(2+)</name>
        <dbReference type="ChEBI" id="CHEBI:29108"/>
        <label>2</label>
        <note>catalytic</note>
    </ligand>
</feature>
<feature type="binding site" evidence="1">
    <location>
        <position position="442"/>
    </location>
    <ligand>
        <name>substrate</name>
    </ligand>
</feature>
<feature type="binding site" evidence="1">
    <location>
        <position position="444"/>
    </location>
    <ligand>
        <name>substrate</name>
    </ligand>
</feature>
<feature type="binding site" evidence="1">
    <location>
        <position position="627"/>
    </location>
    <ligand>
        <name>substrate</name>
    </ligand>
</feature>
<feature type="binding site" evidence="1">
    <location>
        <position position="654"/>
    </location>
    <ligand>
        <name>substrate</name>
    </ligand>
</feature>
<feature type="binding site" evidence="1">
    <location>
        <position position="758"/>
    </location>
    <ligand>
        <name>Ca(2+)</name>
        <dbReference type="ChEBI" id="CHEBI:29108"/>
        <label>3</label>
    </ligand>
</feature>
<feature type="binding site" evidence="1">
    <location>
        <position position="760"/>
    </location>
    <ligand>
        <name>Ca(2+)</name>
        <dbReference type="ChEBI" id="CHEBI:29108"/>
        <label>3</label>
    </ligand>
</feature>
<feature type="binding site" evidence="1">
    <location>
        <position position="784"/>
    </location>
    <ligand>
        <name>Ca(2+)</name>
        <dbReference type="ChEBI" id="CHEBI:29108"/>
        <label>3</label>
    </ligand>
</feature>
<feature type="binding site" evidence="1">
    <location>
        <position position="813"/>
    </location>
    <ligand>
        <name>Ca(2+)</name>
        <dbReference type="ChEBI" id="CHEBI:29108"/>
        <label>4</label>
    </ligand>
</feature>
<feature type="binding site" evidence="1">
    <location>
        <position position="814"/>
    </location>
    <ligand>
        <name>Ca(2+)</name>
        <dbReference type="ChEBI" id="CHEBI:29108"/>
        <label>4</label>
    </ligand>
</feature>
<feature type="binding site" evidence="1">
    <location>
        <position position="815"/>
    </location>
    <ligand>
        <name>Ca(2+)</name>
        <dbReference type="ChEBI" id="CHEBI:29108"/>
        <label>4</label>
    </ligand>
</feature>
<feature type="splice variant" id="VSP_032901" description="In isoform 2." evidence="12">
    <location>
        <begin position="1"/>
        <end position="18"/>
    </location>
</feature>
<feature type="splice variant" id="VSP_032902" description="In isoform 2 and isoform 4." evidence="11 12">
    <location>
        <begin position="862"/>
        <end position="881"/>
    </location>
</feature>
<feature type="splice variant" id="VSP_032903" description="In isoform 4." evidence="11">
    <original>AEDKDGRRKGKASIKDPHFLNFNKKLSSSSSALLH</original>
    <variation>DSSFCRPTEQAKAEMCKVPFPRQLECVMKMEISET</variation>
    <location>
        <begin position="1000"/>
        <end position="1034"/>
    </location>
</feature>
<feature type="splice variant" id="VSP_032904" description="In isoform 3." evidence="10 13">
    <original>AED</original>
    <variation>VQI</variation>
    <location>
        <begin position="1000"/>
        <end position="1002"/>
    </location>
</feature>
<feature type="splice variant" id="VSP_032905" description="In isoform 3." evidence="10 13">
    <location>
        <begin position="1003"/>
        <end position="1693"/>
    </location>
</feature>
<feature type="splice variant" id="VSP_032906" description="In isoform 4." evidence="11">
    <location>
        <begin position="1035"/>
        <end position="1693"/>
    </location>
</feature>
<feature type="sequence variant" id="VAR_087460" description="In HPE14." evidence="9">
    <location>
        <begin position="689"/>
        <end position="1693"/>
    </location>
</feature>
<proteinExistence type="evidence at protein level"/>
<comment type="function">
    <text evidence="8">The production of the second messenger molecules diacylglycerol (DAG) and inositol 1,4,5-trisphosphate (IP3) is mediated by calcium-activated phosphatidylinositol-specific phospholipase C enzymes.</text>
</comment>
<comment type="catalytic activity">
    <reaction evidence="8">
        <text>a 1,2-diacyl-sn-glycero-3-phospho-(1D-myo-inositol-4,5-bisphosphate) + H2O = 1D-myo-inositol 1,4,5-trisphosphate + a 1,2-diacyl-sn-glycerol + H(+)</text>
        <dbReference type="Rhea" id="RHEA:33179"/>
        <dbReference type="ChEBI" id="CHEBI:15377"/>
        <dbReference type="ChEBI" id="CHEBI:15378"/>
        <dbReference type="ChEBI" id="CHEBI:17815"/>
        <dbReference type="ChEBI" id="CHEBI:58456"/>
        <dbReference type="ChEBI" id="CHEBI:203600"/>
        <dbReference type="EC" id="3.1.4.11"/>
    </reaction>
    <physiologicalReaction direction="left-to-right" evidence="15">
        <dbReference type="Rhea" id="RHEA:33180"/>
    </physiologicalReaction>
</comment>
<comment type="cofactor">
    <cofactor evidence="2">
        <name>Ca(2+)</name>
        <dbReference type="ChEBI" id="CHEBI:29108"/>
    </cofactor>
</comment>
<comment type="subcellular location">
    <subcellularLocation>
        <location evidence="8 9">Cytoplasm</location>
    </subcellularLocation>
    <subcellularLocation>
        <location evidence="8">Membrane</location>
    </subcellularLocation>
</comment>
<comment type="alternative products">
    <event type="alternative splicing"/>
    <isoform>
        <id>Q4KWH8-1</id>
        <name>1</name>
        <name>PLC-eta-1</name>
        <sequence type="displayed"/>
    </isoform>
    <isoform>
        <id>Q4KWH8-2</id>
        <name>2</name>
        <sequence type="described" ref="VSP_032901 VSP_032902"/>
    </isoform>
    <isoform>
        <id>Q4KWH8-3</id>
        <name>3</name>
        <name>PLC-eta-1a</name>
        <sequence type="described" ref="VSP_032904 VSP_032905"/>
    </isoform>
    <isoform>
        <id>Q4KWH8-4</id>
        <name>4</name>
        <sequence type="described" ref="VSP_032902 VSP_032903 VSP_032906"/>
    </isoform>
</comment>
<comment type="tissue specificity">
    <text evidence="8 9">Expressed in brain and to a lower extent in lung. In brain, it is found in cerebrum, cerebellum and spinal cord. In embryo expressed in the notochord, developing spinal cord (in a ventral to dorsal gradient), dorsal root ganglia, cerebellum and dermatomyosome.</text>
</comment>
<comment type="disease" evidence="9">
    <disease id="DI-06434">
        <name>Holoprosencephaly 14</name>
        <acronym>HPE14</acronym>
        <description>An autosomal recessive form of holoprosencephaly, a structural anomaly of the brain in which the developing forebrain fails to correctly separate into right and left hemispheres. Holoprosencephaly is genetically heterogeneous and associated with several distinct facies and phenotypic variability. In its most severe form (alobar holoprosencephaly), the forebrain consists of a single ventricle, and midbrain structures may be malformed as well. In the most extreme cases, anophthalmia or cyclopia is evident along with a congenital absence of the mature nose. In milder forms (semilobar or lobar holoprosencephaly), rudimentary midline structures are present. The less severe form features facial dysmorphism characterized by ocular hypertelorism, defects of the upper lip and/or nose, and absence of the olfactory nerves or corpus callosum.</description>
        <dbReference type="MIM" id="619895"/>
    </disease>
    <text>The disease is caused by variants affecting the gene represented in this entry.</text>
</comment>
<comment type="sequence caution" evidence="14">
    <conflict type="erroneous initiation">
        <sequence resource="EMBL-CDS" id="BAB14129"/>
    </conflict>
    <text>Truncated N-terminus.</text>
</comment>
<evidence type="ECO:0000250" key="1"/>
<evidence type="ECO:0000255" key="2">
    <source>
        <dbReference type="PROSITE-ProRule" id="PRU00041"/>
    </source>
</evidence>
<evidence type="ECO:0000255" key="3">
    <source>
        <dbReference type="PROSITE-ProRule" id="PRU00145"/>
    </source>
</evidence>
<evidence type="ECO:0000255" key="4">
    <source>
        <dbReference type="PROSITE-ProRule" id="PRU00270"/>
    </source>
</evidence>
<evidence type="ECO:0000255" key="5">
    <source>
        <dbReference type="PROSITE-ProRule" id="PRU00271"/>
    </source>
</evidence>
<evidence type="ECO:0000255" key="6">
    <source>
        <dbReference type="PROSITE-ProRule" id="PRU00448"/>
    </source>
</evidence>
<evidence type="ECO:0000256" key="7">
    <source>
        <dbReference type="SAM" id="MobiDB-lite"/>
    </source>
</evidence>
<evidence type="ECO:0000269" key="8">
    <source>
    </source>
</evidence>
<evidence type="ECO:0000269" key="9">
    <source>
    </source>
</evidence>
<evidence type="ECO:0000303" key="10">
    <source>
    </source>
</evidence>
<evidence type="ECO:0000303" key="11">
    <source>
    </source>
</evidence>
<evidence type="ECO:0000303" key="12">
    <source>
    </source>
</evidence>
<evidence type="ECO:0000303" key="13">
    <source>
    </source>
</evidence>
<evidence type="ECO:0000305" key="14"/>
<evidence type="ECO:0000305" key="15">
    <source>
    </source>
</evidence>
<evidence type="ECO:0000312" key="16">
    <source>
        <dbReference type="HGNC" id="HGNC:29185"/>
    </source>
</evidence>
<keyword id="KW-0025">Alternative splicing</keyword>
<keyword id="KW-0106">Calcium</keyword>
<keyword id="KW-0963">Cytoplasm</keyword>
<keyword id="KW-0225">Disease variant</keyword>
<keyword id="KW-0370">Holoprosencephaly</keyword>
<keyword id="KW-0378">Hydrolase</keyword>
<keyword id="KW-0442">Lipid degradation</keyword>
<keyword id="KW-0443">Lipid metabolism</keyword>
<keyword id="KW-0472">Membrane</keyword>
<keyword id="KW-0479">Metal-binding</keyword>
<keyword id="KW-1267">Proteomics identification</keyword>
<keyword id="KW-1185">Reference proteome</keyword>
<keyword id="KW-0677">Repeat</keyword>
<keyword id="KW-0807">Transducer</keyword>
<protein>
    <recommendedName>
        <fullName evidence="14">1-phosphatidylinositol 4,5-bisphosphate phosphodiesterase eta-1</fullName>
        <ecNumber>3.1.4.11</ecNumber>
    </recommendedName>
    <alternativeName>
        <fullName>Phosphoinositide phospholipase C-eta-1</fullName>
    </alternativeName>
    <alternativeName>
        <fullName>Phospholipase C-eta-1</fullName>
        <shortName>PLC-eta-1</shortName>
    </alternativeName>
    <alternativeName>
        <fullName>Phospholipase C-like protein 3</fullName>
        <shortName>PLC-L3</shortName>
    </alternativeName>
</protein>
<organism>
    <name type="scientific">Homo sapiens</name>
    <name type="common">Human</name>
    <dbReference type="NCBI Taxonomy" id="9606"/>
    <lineage>
        <taxon>Eukaryota</taxon>
        <taxon>Metazoa</taxon>
        <taxon>Chordata</taxon>
        <taxon>Craniata</taxon>
        <taxon>Vertebrata</taxon>
        <taxon>Euteleostomi</taxon>
        <taxon>Mammalia</taxon>
        <taxon>Eutheria</taxon>
        <taxon>Euarchontoglires</taxon>
        <taxon>Primates</taxon>
        <taxon>Haplorrhini</taxon>
        <taxon>Catarrhini</taxon>
        <taxon>Hominidae</taxon>
        <taxon>Homo</taxon>
    </lineage>
</organism>
<dbReference type="EC" id="3.1.4.11"/>
<dbReference type="EMBL" id="AY691170">
    <property type="protein sequence ID" value="AAW22607.1"/>
    <property type="molecule type" value="mRNA"/>
</dbReference>
<dbReference type="EMBL" id="AY691171">
    <property type="protein sequence ID" value="AAW22608.1"/>
    <property type="molecule type" value="mRNA"/>
</dbReference>
<dbReference type="EMBL" id="BC043248">
    <property type="protein sequence ID" value="AAH43248.2"/>
    <property type="molecule type" value="mRNA"/>
</dbReference>
<dbReference type="EMBL" id="BC113950">
    <property type="protein sequence ID" value="AAI13951.1"/>
    <property type="molecule type" value="mRNA"/>
</dbReference>
<dbReference type="EMBL" id="AB028992">
    <property type="protein sequence ID" value="BAA83021.1"/>
    <property type="molecule type" value="mRNA"/>
</dbReference>
<dbReference type="EMBL" id="AK022610">
    <property type="protein sequence ID" value="BAB14129.1"/>
    <property type="status" value="ALT_INIT"/>
    <property type="molecule type" value="mRNA"/>
</dbReference>
<dbReference type="EMBL" id="CR749869">
    <property type="protein sequence ID" value="CAH18710.1"/>
    <property type="molecule type" value="mRNA"/>
</dbReference>
<dbReference type="CCDS" id="CCDS46939.1">
    <molecule id="Q4KWH8-1"/>
</dbReference>
<dbReference type="CCDS" id="CCDS46940.1">
    <molecule id="Q4KWH8-3"/>
</dbReference>
<dbReference type="RefSeq" id="NP_001124432.1">
    <molecule id="Q4KWH8-1"/>
    <property type="nucleotide sequence ID" value="NM_001130960.2"/>
</dbReference>
<dbReference type="RefSeq" id="NP_001124433.1">
    <molecule id="Q4KWH8-3"/>
    <property type="nucleotide sequence ID" value="NM_001130961.2"/>
</dbReference>
<dbReference type="RefSeq" id="NP_001336179.1">
    <molecule id="Q4KWH8-3"/>
    <property type="nucleotide sequence ID" value="NM_001349250.2"/>
</dbReference>
<dbReference type="RefSeq" id="NP_055811.1">
    <property type="nucleotide sequence ID" value="NM_014996.2"/>
</dbReference>
<dbReference type="RefSeq" id="XP_016861418.1">
    <property type="nucleotide sequence ID" value="XM_017005929.1"/>
</dbReference>
<dbReference type="SMR" id="Q4KWH8"/>
<dbReference type="BioGRID" id="116651">
    <property type="interactions" value="79"/>
</dbReference>
<dbReference type="FunCoup" id="Q4KWH8">
    <property type="interactions" value="1757"/>
</dbReference>
<dbReference type="IntAct" id="Q4KWH8">
    <property type="interactions" value="34"/>
</dbReference>
<dbReference type="MINT" id="Q4KWH8"/>
<dbReference type="STRING" id="9606.ENSP00000345988"/>
<dbReference type="SwissLipids" id="SLP:000000940"/>
<dbReference type="CarbonylDB" id="Q4KWH8"/>
<dbReference type="GlyGen" id="Q4KWH8">
    <property type="glycosylation" value="4 sites, 1 O-linked glycan (3 sites)"/>
</dbReference>
<dbReference type="iPTMnet" id="Q4KWH8"/>
<dbReference type="PhosphoSitePlus" id="Q4KWH8"/>
<dbReference type="BioMuta" id="PLCH1"/>
<dbReference type="DMDM" id="121947010"/>
<dbReference type="jPOST" id="Q4KWH8"/>
<dbReference type="MassIVE" id="Q4KWH8"/>
<dbReference type="PaxDb" id="9606-ENSP00000345988"/>
<dbReference type="PeptideAtlas" id="Q4KWH8"/>
<dbReference type="ProteomicsDB" id="62214">
    <molecule id="Q4KWH8-1"/>
</dbReference>
<dbReference type="ProteomicsDB" id="62215">
    <molecule id="Q4KWH8-2"/>
</dbReference>
<dbReference type="ProteomicsDB" id="62216">
    <molecule id="Q4KWH8-3"/>
</dbReference>
<dbReference type="ProteomicsDB" id="62217">
    <molecule id="Q4KWH8-4"/>
</dbReference>
<dbReference type="Pumba" id="Q4KWH8"/>
<dbReference type="Antibodypedia" id="46750">
    <property type="antibodies" value="84 antibodies from 24 providers"/>
</dbReference>
<dbReference type="DNASU" id="23007"/>
<dbReference type="Ensembl" id="ENST00000334686.6">
    <molecule id="Q4KWH8-2"/>
    <property type="protein sequence ID" value="ENSP00000335469.6"/>
    <property type="gene ID" value="ENSG00000114805.18"/>
</dbReference>
<dbReference type="Ensembl" id="ENST00000340059.11">
    <molecule id="Q4KWH8-1"/>
    <property type="protein sequence ID" value="ENSP00000345988.7"/>
    <property type="gene ID" value="ENSG00000114805.18"/>
</dbReference>
<dbReference type="Ensembl" id="ENST00000447496.6">
    <molecule id="Q4KWH8-3"/>
    <property type="protein sequence ID" value="ENSP00000402759.2"/>
    <property type="gene ID" value="ENSG00000114805.18"/>
</dbReference>
<dbReference type="Ensembl" id="ENST00000494598.5">
    <molecule id="Q4KWH8-4"/>
    <property type="protein sequence ID" value="ENSP00000419100.1"/>
    <property type="gene ID" value="ENSG00000114805.18"/>
</dbReference>
<dbReference type="GeneID" id="23007"/>
<dbReference type="KEGG" id="hsa:23007"/>
<dbReference type="UCSC" id="uc062pff.1">
    <molecule id="Q4KWH8-1"/>
    <property type="organism name" value="human"/>
</dbReference>
<dbReference type="AGR" id="HGNC:29185"/>
<dbReference type="CTD" id="23007"/>
<dbReference type="DisGeNET" id="23007"/>
<dbReference type="GeneCards" id="PLCH1"/>
<dbReference type="HGNC" id="HGNC:29185">
    <property type="gene designation" value="PLCH1"/>
</dbReference>
<dbReference type="HPA" id="ENSG00000114805">
    <property type="expression patterns" value="Tissue enhanced (lymphoid tissue, retina, testis)"/>
</dbReference>
<dbReference type="MalaCards" id="PLCH1"/>
<dbReference type="MIM" id="612835">
    <property type="type" value="gene"/>
</dbReference>
<dbReference type="MIM" id="619895">
    <property type="type" value="phenotype"/>
</dbReference>
<dbReference type="neXtProt" id="NX_Q4KWH8"/>
<dbReference type="OpenTargets" id="ENSG00000114805"/>
<dbReference type="Orphanet" id="93925">
    <property type="disease" value="Alobar holoprosencephaly"/>
</dbReference>
<dbReference type="PharmGKB" id="PA128394595"/>
<dbReference type="VEuPathDB" id="HostDB:ENSG00000114805"/>
<dbReference type="eggNOG" id="KOG0169">
    <property type="taxonomic scope" value="Eukaryota"/>
</dbReference>
<dbReference type="GeneTree" id="ENSGT00940000157185"/>
<dbReference type="HOGENOM" id="CLU_002738_0_1_1"/>
<dbReference type="InParanoid" id="Q4KWH8"/>
<dbReference type="OrthoDB" id="269822at2759"/>
<dbReference type="PAN-GO" id="Q4KWH8">
    <property type="GO annotations" value="2 GO annotations based on evolutionary models"/>
</dbReference>
<dbReference type="PhylomeDB" id="Q4KWH8"/>
<dbReference type="TreeFam" id="TF313216"/>
<dbReference type="BRENDA" id="3.1.4.11">
    <property type="organism ID" value="2681"/>
</dbReference>
<dbReference type="PathwayCommons" id="Q4KWH8"/>
<dbReference type="Reactome" id="R-HSA-1855204">
    <property type="pathway name" value="Synthesis of IP3 and IP4 in the cytosol"/>
</dbReference>
<dbReference type="SignaLink" id="Q4KWH8"/>
<dbReference type="BioGRID-ORCS" id="23007">
    <property type="hits" value="11 hits in 1157 CRISPR screens"/>
</dbReference>
<dbReference type="ChiTaRS" id="PLCH1">
    <property type="organism name" value="human"/>
</dbReference>
<dbReference type="GenomeRNAi" id="23007"/>
<dbReference type="Pharos" id="Q4KWH8">
    <property type="development level" value="Tbio"/>
</dbReference>
<dbReference type="PRO" id="PR:Q4KWH8"/>
<dbReference type="Proteomes" id="UP000005640">
    <property type="component" value="Chromosome 3"/>
</dbReference>
<dbReference type="RNAct" id="Q4KWH8">
    <property type="molecule type" value="protein"/>
</dbReference>
<dbReference type="Bgee" id="ENSG00000114805">
    <property type="expression patterns" value="Expressed in bronchial epithelial cell and 134 other cell types or tissues"/>
</dbReference>
<dbReference type="ExpressionAtlas" id="Q4KWH8">
    <property type="expression patterns" value="baseline and differential"/>
</dbReference>
<dbReference type="GO" id="GO:0005737">
    <property type="term" value="C:cytoplasm"/>
    <property type="evidence" value="ECO:0000314"/>
    <property type="project" value="MGI"/>
</dbReference>
<dbReference type="GO" id="GO:0043231">
    <property type="term" value="C:intracellular membrane-bounded organelle"/>
    <property type="evidence" value="ECO:0000314"/>
    <property type="project" value="HPA"/>
</dbReference>
<dbReference type="GO" id="GO:0005886">
    <property type="term" value="C:plasma membrane"/>
    <property type="evidence" value="ECO:0000304"/>
    <property type="project" value="Reactome"/>
</dbReference>
<dbReference type="GO" id="GO:0005509">
    <property type="term" value="F:calcium ion binding"/>
    <property type="evidence" value="ECO:0007669"/>
    <property type="project" value="InterPro"/>
</dbReference>
<dbReference type="GO" id="GO:0050429">
    <property type="term" value="F:calcium-dependent phospholipase C activity"/>
    <property type="evidence" value="ECO:0000314"/>
    <property type="project" value="MGI"/>
</dbReference>
<dbReference type="GO" id="GO:0004435">
    <property type="term" value="F:phosphatidylinositol-4,5-bisphosphate phospholipase C activity"/>
    <property type="evidence" value="ECO:0000318"/>
    <property type="project" value="GO_Central"/>
</dbReference>
<dbReference type="GO" id="GO:0016042">
    <property type="term" value="P:lipid catabolic process"/>
    <property type="evidence" value="ECO:0007669"/>
    <property type="project" value="UniProtKB-KW"/>
</dbReference>
<dbReference type="GO" id="GO:0046488">
    <property type="term" value="P:phosphatidylinositol metabolic process"/>
    <property type="evidence" value="ECO:0000318"/>
    <property type="project" value="GO_Central"/>
</dbReference>
<dbReference type="GO" id="GO:0048015">
    <property type="term" value="P:phosphatidylinositol-mediated signaling"/>
    <property type="evidence" value="ECO:0000314"/>
    <property type="project" value="MGI"/>
</dbReference>
<dbReference type="GO" id="GO:0051209">
    <property type="term" value="P:release of sequestered calcium ion into cytosol"/>
    <property type="evidence" value="ECO:0000318"/>
    <property type="project" value="GO_Central"/>
</dbReference>
<dbReference type="CDD" id="cd00275">
    <property type="entry name" value="C2_PLC_like"/>
    <property type="match status" value="1"/>
</dbReference>
<dbReference type="CDD" id="cd16220">
    <property type="entry name" value="EFh_PI-PLCeta1"/>
    <property type="match status" value="1"/>
</dbReference>
<dbReference type="CDD" id="cd08632">
    <property type="entry name" value="PI-PLCc_eta1"/>
    <property type="match status" value="1"/>
</dbReference>
<dbReference type="FunFam" id="1.10.238.10:FF:000005">
    <property type="entry name" value="Phosphoinositide phospholipase C"/>
    <property type="match status" value="1"/>
</dbReference>
<dbReference type="FunFam" id="1.10.238.10:FF:000036">
    <property type="entry name" value="Phosphoinositide phospholipase C"/>
    <property type="match status" value="1"/>
</dbReference>
<dbReference type="FunFam" id="2.30.29.30:FF:000063">
    <property type="entry name" value="Phosphoinositide phospholipase C"/>
    <property type="match status" value="1"/>
</dbReference>
<dbReference type="FunFam" id="2.60.40.150:FF:000018">
    <property type="entry name" value="Phosphoinositide phospholipase C"/>
    <property type="match status" value="1"/>
</dbReference>
<dbReference type="FunFam" id="3.20.20.190:FF:000002">
    <property type="entry name" value="Phosphoinositide phospholipase C"/>
    <property type="match status" value="1"/>
</dbReference>
<dbReference type="FunFam" id="3.20.20.190:FF:000066">
    <property type="entry name" value="Phosphoinositide phospholipase C"/>
    <property type="match status" value="1"/>
</dbReference>
<dbReference type="Gene3D" id="2.60.40.150">
    <property type="entry name" value="C2 domain"/>
    <property type="match status" value="1"/>
</dbReference>
<dbReference type="Gene3D" id="1.10.238.10">
    <property type="entry name" value="EF-hand"/>
    <property type="match status" value="2"/>
</dbReference>
<dbReference type="Gene3D" id="3.20.20.190">
    <property type="entry name" value="Phosphatidylinositol (PI) phosphodiesterase"/>
    <property type="match status" value="2"/>
</dbReference>
<dbReference type="Gene3D" id="2.30.29.30">
    <property type="entry name" value="Pleckstrin-homology domain (PH domain)/Phosphotyrosine-binding domain (PTB)"/>
    <property type="match status" value="1"/>
</dbReference>
<dbReference type="InterPro" id="IPR000008">
    <property type="entry name" value="C2_dom"/>
</dbReference>
<dbReference type="InterPro" id="IPR035892">
    <property type="entry name" value="C2_domain_sf"/>
</dbReference>
<dbReference type="InterPro" id="IPR011992">
    <property type="entry name" value="EF-hand-dom_pair"/>
</dbReference>
<dbReference type="InterPro" id="IPR018247">
    <property type="entry name" value="EF_Hand_1_Ca_BS"/>
</dbReference>
<dbReference type="InterPro" id="IPR002048">
    <property type="entry name" value="EF_hand_dom"/>
</dbReference>
<dbReference type="InterPro" id="IPR011993">
    <property type="entry name" value="PH-like_dom_sf"/>
</dbReference>
<dbReference type="InterPro" id="IPR001849">
    <property type="entry name" value="PH_domain"/>
</dbReference>
<dbReference type="InterPro" id="IPR001192">
    <property type="entry name" value="PI-PLC_fam"/>
</dbReference>
<dbReference type="InterPro" id="IPR028392">
    <property type="entry name" value="PLC-eta1_cat"/>
</dbReference>
<dbReference type="InterPro" id="IPR017946">
    <property type="entry name" value="PLC-like_Pdiesterase_TIM-brl"/>
</dbReference>
<dbReference type="InterPro" id="IPR015359">
    <property type="entry name" value="PLC_EF-hand-like"/>
</dbReference>
<dbReference type="InterPro" id="IPR046972">
    <property type="entry name" value="PLCeta1_EF"/>
</dbReference>
<dbReference type="InterPro" id="IPR000909">
    <property type="entry name" value="PLipase_C_PInositol-sp_X_dom"/>
</dbReference>
<dbReference type="InterPro" id="IPR001711">
    <property type="entry name" value="PLipase_C_Pinositol-sp_Y"/>
</dbReference>
<dbReference type="PANTHER" id="PTHR10336:SF51">
    <property type="entry name" value="1-PHOSPHATIDYLINOSITOL 4,5-BISPHOSPHATE PHOSPHODIESTERASE ETA-1"/>
    <property type="match status" value="1"/>
</dbReference>
<dbReference type="PANTHER" id="PTHR10336">
    <property type="entry name" value="PHOSPHOINOSITIDE-SPECIFIC PHOSPHOLIPASE C FAMILY PROTEIN"/>
    <property type="match status" value="1"/>
</dbReference>
<dbReference type="Pfam" id="PF00168">
    <property type="entry name" value="C2"/>
    <property type="match status" value="1"/>
</dbReference>
<dbReference type="Pfam" id="PF09279">
    <property type="entry name" value="EF-hand_like"/>
    <property type="match status" value="1"/>
</dbReference>
<dbReference type="Pfam" id="PF16457">
    <property type="entry name" value="PH_12"/>
    <property type="match status" value="1"/>
</dbReference>
<dbReference type="Pfam" id="PF00388">
    <property type="entry name" value="PI-PLC-X"/>
    <property type="match status" value="1"/>
</dbReference>
<dbReference type="Pfam" id="PF00387">
    <property type="entry name" value="PI-PLC-Y"/>
    <property type="match status" value="1"/>
</dbReference>
<dbReference type="PRINTS" id="PR00390">
    <property type="entry name" value="PHPHLIPASEC"/>
</dbReference>
<dbReference type="SMART" id="SM00239">
    <property type="entry name" value="C2"/>
    <property type="match status" value="1"/>
</dbReference>
<dbReference type="SMART" id="SM00054">
    <property type="entry name" value="EFh"/>
    <property type="match status" value="2"/>
</dbReference>
<dbReference type="SMART" id="SM00233">
    <property type="entry name" value="PH"/>
    <property type="match status" value="1"/>
</dbReference>
<dbReference type="SMART" id="SM00148">
    <property type="entry name" value="PLCXc"/>
    <property type="match status" value="1"/>
</dbReference>
<dbReference type="SMART" id="SM00149">
    <property type="entry name" value="PLCYc"/>
    <property type="match status" value="1"/>
</dbReference>
<dbReference type="SUPFAM" id="SSF49562">
    <property type="entry name" value="C2 domain (Calcium/lipid-binding domain, CaLB)"/>
    <property type="match status" value="1"/>
</dbReference>
<dbReference type="SUPFAM" id="SSF47473">
    <property type="entry name" value="EF-hand"/>
    <property type="match status" value="1"/>
</dbReference>
<dbReference type="SUPFAM" id="SSF50729">
    <property type="entry name" value="PH domain-like"/>
    <property type="match status" value="1"/>
</dbReference>
<dbReference type="SUPFAM" id="SSF51695">
    <property type="entry name" value="PLC-like phosphodiesterases"/>
    <property type="match status" value="1"/>
</dbReference>
<dbReference type="PROSITE" id="PS50004">
    <property type="entry name" value="C2"/>
    <property type="match status" value="1"/>
</dbReference>
<dbReference type="PROSITE" id="PS00018">
    <property type="entry name" value="EF_HAND_1"/>
    <property type="match status" value="1"/>
</dbReference>
<dbReference type="PROSITE" id="PS50222">
    <property type="entry name" value="EF_HAND_2"/>
    <property type="match status" value="3"/>
</dbReference>
<dbReference type="PROSITE" id="PS50003">
    <property type="entry name" value="PH_DOMAIN"/>
    <property type="match status" value="1"/>
</dbReference>
<dbReference type="PROSITE" id="PS50007">
    <property type="entry name" value="PIPLC_X_DOMAIN"/>
    <property type="match status" value="1"/>
</dbReference>
<dbReference type="PROSITE" id="PS50008">
    <property type="entry name" value="PIPLC_Y_DOMAIN"/>
    <property type="match status" value="1"/>
</dbReference>